<gene>
    <name type="primary">ULA1</name>
    <name type="synonym">ENR2</name>
    <name type="ordered locus">YPL003W</name>
    <name type="ORF">LPA14W</name>
</gene>
<name>ULA1_YEAST</name>
<dbReference type="EMBL" id="Y16889">
    <property type="protein sequence ID" value="CAA76515.1"/>
    <property type="molecule type" value="Genomic_DNA"/>
</dbReference>
<dbReference type="EMBL" id="Z71255">
    <property type="protein sequence ID" value="CAA95038.1"/>
    <property type="molecule type" value="Genomic_DNA"/>
</dbReference>
<dbReference type="EMBL" id="Z48483">
    <property type="protein sequence ID" value="CAA88383.1"/>
    <property type="molecule type" value="Genomic_DNA"/>
</dbReference>
<dbReference type="EMBL" id="U33335">
    <property type="protein sequence ID" value="AAB68102.1"/>
    <property type="molecule type" value="Genomic_DNA"/>
</dbReference>
<dbReference type="EMBL" id="BK006949">
    <property type="protein sequence ID" value="DAA11425.1"/>
    <property type="molecule type" value="Genomic_DNA"/>
</dbReference>
<dbReference type="PIR" id="S52528">
    <property type="entry name" value="S52528"/>
</dbReference>
<dbReference type="RefSeq" id="NP_015322.1">
    <property type="nucleotide sequence ID" value="NM_001183817.1"/>
</dbReference>
<dbReference type="SMR" id="Q12059"/>
<dbReference type="BioGRID" id="36174">
    <property type="interactions" value="119"/>
</dbReference>
<dbReference type="ComplexPortal" id="CPX-1414">
    <property type="entry name" value="UBA3-ULA1 E1 enzyme"/>
</dbReference>
<dbReference type="DIP" id="DIP-1718N"/>
<dbReference type="FunCoup" id="Q12059">
    <property type="interactions" value="38"/>
</dbReference>
<dbReference type="IntAct" id="Q12059">
    <property type="interactions" value="5"/>
</dbReference>
<dbReference type="MINT" id="Q12059"/>
<dbReference type="STRING" id="4932.YPL003W"/>
<dbReference type="PaxDb" id="4932-YPL003W"/>
<dbReference type="PeptideAtlas" id="Q12059"/>
<dbReference type="TopDownProteomics" id="Q12059"/>
<dbReference type="EnsemblFungi" id="YPL003W_mRNA">
    <property type="protein sequence ID" value="YPL003W"/>
    <property type="gene ID" value="YPL003W"/>
</dbReference>
<dbReference type="GeneID" id="856104"/>
<dbReference type="KEGG" id="sce:YPL003W"/>
<dbReference type="AGR" id="SGD:S000005924"/>
<dbReference type="SGD" id="S000005924">
    <property type="gene designation" value="ULA1"/>
</dbReference>
<dbReference type="VEuPathDB" id="FungiDB:YPL003W"/>
<dbReference type="eggNOG" id="KOG2016">
    <property type="taxonomic scope" value="Eukaryota"/>
</dbReference>
<dbReference type="HOGENOM" id="CLU_019618_2_0_1"/>
<dbReference type="InParanoid" id="Q12059"/>
<dbReference type="OMA" id="FWILACT"/>
<dbReference type="OrthoDB" id="1708823at2759"/>
<dbReference type="BioCyc" id="YEAST:G3O-33922-MONOMER"/>
<dbReference type="Reactome" id="R-SCE-8951664">
    <property type="pathway name" value="Neddylation"/>
</dbReference>
<dbReference type="UniPathway" id="UPA00885"/>
<dbReference type="BioGRID-ORCS" id="856104">
    <property type="hits" value="1 hit in 10 CRISPR screens"/>
</dbReference>
<dbReference type="PRO" id="PR:Q12059"/>
<dbReference type="Proteomes" id="UP000002311">
    <property type="component" value="Chromosome XVI"/>
</dbReference>
<dbReference type="RNAct" id="Q12059">
    <property type="molecule type" value="protein"/>
</dbReference>
<dbReference type="GO" id="GO:0005737">
    <property type="term" value="C:cytoplasm"/>
    <property type="evidence" value="ECO:0000318"/>
    <property type="project" value="GO_Central"/>
</dbReference>
<dbReference type="GO" id="GO:0120123">
    <property type="term" value="C:ubiquitin activating enzyme complex"/>
    <property type="evidence" value="ECO:0000353"/>
    <property type="project" value="ComplexPortal"/>
</dbReference>
<dbReference type="GO" id="GO:0005524">
    <property type="term" value="F:ATP binding"/>
    <property type="evidence" value="ECO:0007669"/>
    <property type="project" value="UniProtKB-KW"/>
</dbReference>
<dbReference type="GO" id="GO:0019781">
    <property type="term" value="F:NEDD8 activating enzyme activity"/>
    <property type="evidence" value="ECO:0000314"/>
    <property type="project" value="SGD"/>
</dbReference>
<dbReference type="GO" id="GO:0045116">
    <property type="term" value="P:protein neddylation"/>
    <property type="evidence" value="ECO:0000314"/>
    <property type="project" value="ComplexPortal"/>
</dbReference>
<dbReference type="Gene3D" id="3.40.50.720">
    <property type="entry name" value="NAD(P)-binding Rossmann-like Domain"/>
    <property type="match status" value="3"/>
</dbReference>
<dbReference type="InterPro" id="IPR030667">
    <property type="entry name" value="APP-BP1"/>
</dbReference>
<dbReference type="InterPro" id="IPR045886">
    <property type="entry name" value="ThiF/MoeB/HesA"/>
</dbReference>
<dbReference type="InterPro" id="IPR035985">
    <property type="entry name" value="Ubiquitin-activating_enz"/>
</dbReference>
<dbReference type="PANTHER" id="PTHR10953:SF29">
    <property type="entry name" value="NEDD8-ACTIVATING ENZYME E1 REGULATORY SUBUNIT"/>
    <property type="match status" value="1"/>
</dbReference>
<dbReference type="PANTHER" id="PTHR10953">
    <property type="entry name" value="UBIQUITIN-ACTIVATING ENZYME E1"/>
    <property type="match status" value="1"/>
</dbReference>
<dbReference type="PIRSF" id="PIRSF039099">
    <property type="entry name" value="APP-BP1"/>
    <property type="match status" value="1"/>
</dbReference>
<dbReference type="SUPFAM" id="SSF69572">
    <property type="entry name" value="Activating enzymes of the ubiquitin-like proteins"/>
    <property type="match status" value="1"/>
</dbReference>
<keyword id="KW-0067">ATP-binding</keyword>
<keyword id="KW-0547">Nucleotide-binding</keyword>
<keyword id="KW-1185">Reference proteome</keyword>
<keyword id="KW-0833">Ubl conjugation pathway</keyword>
<proteinExistence type="evidence at protein level"/>
<sequence>MERYDRQLRLWGALGQDSLNRSRVCVVGPATPLLQEVFKNLVLAGISSLTWLKVECAVQSGSLFLAELKKDLEPLASKQLEYEENDLRKTLQQPQYDWTRFSVVILTCIGEQTAMLDLNEIRRQRGTKFPPVLNTFVSGFYGYIYLVLSETHFVLQAHPDSKKYDLRLQNPWPELINYVDTFDLSKMDTATFSGIPYTVLLMKCIAKLERDGNNGRITIDQMKKVLDQICLPLGNDVIYEPNYVEAKRYAYLACSQNDCCKELEDLLRNLEISDYGNDWHDTYNYEILTLLLTLKNIAKENGELSFQPLTGTLPDMESTTENYIRLKKLYEVKAKLDKSRVEESLARSKKIVSQDVLETFCSHYGEVRKILPPKSDLLGIFSTSNALLDALVMVQFWEQPAVTAEDKDEFIGLRVDDNYSVMAFFGGAVVQEAIKLITHHYVPIDNLFLYNGINNSSATYKI</sequence>
<comment type="function">
    <text evidence="2 3">Regulatory subunit of the dimeric UBA3-ULA1 E1 enzyme. E1 activates NEDD8/RUB1 by first adenylating its C-terminal glycine residue with ATP, thereafter linking this residue to the side chain of the catalytic cysteine, yielding a NEDD8-UBA3 thioester and free AMP. E1 finally transfers NEDD8 to the catalytic cysteine of UBC12.</text>
</comment>
<comment type="pathway">
    <text>Protein modification; protein neddylation.</text>
</comment>
<comment type="subunit">
    <text evidence="1">Heterodimer of UBA3 and ULA1. The complex binds NEDD8 and UBC12 (By similarity).</text>
</comment>
<comment type="interaction">
    <interactant intactId="EBI-32882">
        <id>Q12059</id>
    </interactant>
    <interactant intactId="EBI-37997">
        <id>Q99344</id>
        <label>UBA3</label>
    </interactant>
    <organismsDiffer>false</organismsDiffer>
    <experiments>4</experiments>
</comment>
<comment type="similarity">
    <text evidence="4">Belongs to the ubiquitin-activating E1 family. ULA1 subfamily.</text>
</comment>
<feature type="chain" id="PRO_0000194962" description="NEDD8-activating enzyme E1 regulatory subunit">
    <location>
        <begin position="1"/>
        <end position="462"/>
    </location>
</feature>
<accession>Q12059</accession>
<accession>D6W409</accession>
<organism>
    <name type="scientific">Saccharomyces cerevisiae (strain ATCC 204508 / S288c)</name>
    <name type="common">Baker's yeast</name>
    <dbReference type="NCBI Taxonomy" id="559292"/>
    <lineage>
        <taxon>Eukaryota</taxon>
        <taxon>Fungi</taxon>
        <taxon>Dikarya</taxon>
        <taxon>Ascomycota</taxon>
        <taxon>Saccharomycotina</taxon>
        <taxon>Saccharomycetes</taxon>
        <taxon>Saccharomycetales</taxon>
        <taxon>Saccharomycetaceae</taxon>
        <taxon>Saccharomyces</taxon>
    </lineage>
</organism>
<reference key="1">
    <citation type="journal article" date="1998" name="EMBO J.">
        <title>A novel protein modification pathway related to the ubiquitin system.</title>
        <authorList>
            <person name="Liakopoulos D."/>
            <person name="Doenges G."/>
            <person name="Matuschewski K."/>
            <person name="Jentsch S."/>
        </authorList>
    </citation>
    <scope>NUCLEOTIDE SEQUENCE [GENOMIC DNA]</scope>
    <scope>FUNCTION</scope>
    <source>
        <strain>ATCC 200912 / DF5</strain>
    </source>
</reference>
<reference key="2">
    <citation type="journal article" date="1997" name="Nature">
        <title>The nucleotide sequence of Saccharomyces cerevisiae chromosome XVI.</title>
        <authorList>
            <person name="Bussey H."/>
            <person name="Storms R.K."/>
            <person name="Ahmed A."/>
            <person name="Albermann K."/>
            <person name="Allen E."/>
            <person name="Ansorge W."/>
            <person name="Araujo R."/>
            <person name="Aparicio A."/>
            <person name="Barrell B.G."/>
            <person name="Badcock K."/>
            <person name="Benes V."/>
            <person name="Botstein D."/>
            <person name="Bowman S."/>
            <person name="Brueckner M."/>
            <person name="Carpenter J."/>
            <person name="Cherry J.M."/>
            <person name="Chung E."/>
            <person name="Churcher C.M."/>
            <person name="Coster F."/>
            <person name="Davis K."/>
            <person name="Davis R.W."/>
            <person name="Dietrich F.S."/>
            <person name="Delius H."/>
            <person name="DiPaolo T."/>
            <person name="Dubois E."/>
            <person name="Duesterhoeft A."/>
            <person name="Duncan M."/>
            <person name="Floeth M."/>
            <person name="Fortin N."/>
            <person name="Friesen J.D."/>
            <person name="Fritz C."/>
            <person name="Goffeau A."/>
            <person name="Hall J."/>
            <person name="Hebling U."/>
            <person name="Heumann K."/>
            <person name="Hilbert H."/>
            <person name="Hillier L.W."/>
            <person name="Hunicke-Smith S."/>
            <person name="Hyman R.W."/>
            <person name="Johnston M."/>
            <person name="Kalman S."/>
            <person name="Kleine K."/>
            <person name="Komp C."/>
            <person name="Kurdi O."/>
            <person name="Lashkari D."/>
            <person name="Lew H."/>
            <person name="Lin A."/>
            <person name="Lin D."/>
            <person name="Louis E.J."/>
            <person name="Marathe R."/>
            <person name="Messenguy F."/>
            <person name="Mewes H.-W."/>
            <person name="Mirtipati S."/>
            <person name="Moestl D."/>
            <person name="Mueller-Auer S."/>
            <person name="Namath A."/>
            <person name="Nentwich U."/>
            <person name="Oefner P."/>
            <person name="Pearson D."/>
            <person name="Petel F.X."/>
            <person name="Pohl T.M."/>
            <person name="Purnelle B."/>
            <person name="Rajandream M.A."/>
            <person name="Rechmann S."/>
            <person name="Rieger M."/>
            <person name="Riles L."/>
            <person name="Roberts D."/>
            <person name="Schaefer M."/>
            <person name="Scharfe M."/>
            <person name="Scherens B."/>
            <person name="Schramm S."/>
            <person name="Schroeder M."/>
            <person name="Sdicu A.-M."/>
            <person name="Tettelin H."/>
            <person name="Urrestarazu L.A."/>
            <person name="Ushinsky S."/>
            <person name="Vierendeels F."/>
            <person name="Vissers S."/>
            <person name="Voss H."/>
            <person name="Walsh S.V."/>
            <person name="Wambutt R."/>
            <person name="Wang Y."/>
            <person name="Wedler E."/>
            <person name="Wedler H."/>
            <person name="Winnett E."/>
            <person name="Zhong W.-W."/>
            <person name="Zollner A."/>
            <person name="Vo D.H."/>
            <person name="Hani J."/>
        </authorList>
    </citation>
    <scope>NUCLEOTIDE SEQUENCE [LARGE SCALE GENOMIC DNA]</scope>
    <source>
        <strain>ATCC 204508 / S288c</strain>
    </source>
</reference>
<reference key="3">
    <citation type="journal article" date="2014" name="G3 (Bethesda)">
        <title>The reference genome sequence of Saccharomyces cerevisiae: Then and now.</title>
        <authorList>
            <person name="Engel S.R."/>
            <person name="Dietrich F.S."/>
            <person name="Fisk D.G."/>
            <person name="Binkley G."/>
            <person name="Balakrishnan R."/>
            <person name="Costanzo M.C."/>
            <person name="Dwight S.S."/>
            <person name="Hitz B.C."/>
            <person name="Karra K."/>
            <person name="Nash R.S."/>
            <person name="Weng S."/>
            <person name="Wong E.D."/>
            <person name="Lloyd P."/>
            <person name="Skrzypek M.S."/>
            <person name="Miyasato S.R."/>
            <person name="Simison M."/>
            <person name="Cherry J.M."/>
        </authorList>
    </citation>
    <scope>GENOME REANNOTATION</scope>
    <source>
        <strain>ATCC 204508 / S288c</strain>
    </source>
</reference>
<reference key="4">
    <citation type="journal article" date="1998" name="Genes Dev.">
        <title>Modification of yeast Cdc53p by the ubiquitin-related protein Rub1p affects function of the SCFCdc4 complex.</title>
        <authorList>
            <person name="Lammer D."/>
            <person name="Mathias N."/>
            <person name="Laplaza J.M."/>
            <person name="Jiang W."/>
            <person name="Liu Y."/>
            <person name="Callis J."/>
            <person name="Goebl M."/>
            <person name="Estelle M."/>
        </authorList>
    </citation>
    <scope>FUNCTION</scope>
</reference>
<evidence type="ECO:0000250" key="1"/>
<evidence type="ECO:0000269" key="2">
    <source>
    </source>
</evidence>
<evidence type="ECO:0000269" key="3">
    <source>
    </source>
</evidence>
<evidence type="ECO:0000305" key="4"/>
<protein>
    <recommendedName>
        <fullName>NEDD8-activating enzyme E1 regulatory subunit</fullName>
    </recommendedName>
    <alternativeName>
        <fullName>E1 N-terminus-related protein 2</fullName>
    </alternativeName>
    <alternativeName>
        <fullName>Ubiquitin-activating enzyme E1-like 1</fullName>
    </alternativeName>
    <alternativeName>
        <fullName>Ubiquitin-like activation protein 1</fullName>
    </alternativeName>
</protein>